<organism>
    <name type="scientific">Thermoanaerobacter sp. (strain X514)</name>
    <dbReference type="NCBI Taxonomy" id="399726"/>
    <lineage>
        <taxon>Bacteria</taxon>
        <taxon>Bacillati</taxon>
        <taxon>Bacillota</taxon>
        <taxon>Clostridia</taxon>
        <taxon>Thermoanaerobacterales</taxon>
        <taxon>Thermoanaerobacteraceae</taxon>
        <taxon>Thermoanaerobacter</taxon>
    </lineage>
</organism>
<proteinExistence type="inferred from homology"/>
<protein>
    <recommendedName>
        <fullName evidence="1">UPF0251 protein Teth514_1147</fullName>
    </recommendedName>
</protein>
<accession>B0K6G7</accession>
<feature type="chain" id="PRO_1000131586" description="UPF0251 protein Teth514_1147">
    <location>
        <begin position="1"/>
        <end position="113"/>
    </location>
</feature>
<reference key="1">
    <citation type="submission" date="2008-01" db="EMBL/GenBank/DDBJ databases">
        <title>Complete sequence of Thermoanaerobacter sp. X514.</title>
        <authorList>
            <consortium name="US DOE Joint Genome Institute"/>
            <person name="Copeland A."/>
            <person name="Lucas S."/>
            <person name="Lapidus A."/>
            <person name="Barry K."/>
            <person name="Glavina del Rio T."/>
            <person name="Dalin E."/>
            <person name="Tice H."/>
            <person name="Pitluck S."/>
            <person name="Bruce D."/>
            <person name="Goodwin L."/>
            <person name="Saunders E."/>
            <person name="Brettin T."/>
            <person name="Detter J.C."/>
            <person name="Han C."/>
            <person name="Schmutz J."/>
            <person name="Larimer F."/>
            <person name="Land M."/>
            <person name="Hauser L."/>
            <person name="Kyrpides N."/>
            <person name="Kim E."/>
            <person name="Hemme C."/>
            <person name="Fields M.W."/>
            <person name="He Z."/>
            <person name="Zhou J."/>
            <person name="Richardson P."/>
        </authorList>
    </citation>
    <scope>NUCLEOTIDE SEQUENCE [LARGE SCALE GENOMIC DNA]</scope>
    <source>
        <strain>X514</strain>
    </source>
</reference>
<gene>
    <name type="ordered locus">Teth514_1147</name>
</gene>
<name>Y1147_THEPX</name>
<sequence length="113" mass="13093">MPRPPKCRWVRSEPNVTHFKPVGVPMSMLDEVILTVEELEAIRLKDLEGLEQEECADMMKVSRPTFFRIINSARQKVADALVNGKAIRVEGGNYRVYEEEQRGHRGMRHRHGH</sequence>
<dbReference type="EMBL" id="CP000923">
    <property type="protein sequence ID" value="ABY92443.1"/>
    <property type="molecule type" value="Genomic_DNA"/>
</dbReference>
<dbReference type="RefSeq" id="WP_009052712.1">
    <property type="nucleotide sequence ID" value="NC_010320.1"/>
</dbReference>
<dbReference type="KEGG" id="tex:Teth514_1147"/>
<dbReference type="HOGENOM" id="CLU_094511_1_0_9"/>
<dbReference type="Proteomes" id="UP000002155">
    <property type="component" value="Chromosome"/>
</dbReference>
<dbReference type="Gene3D" id="1.10.10.10">
    <property type="entry name" value="Winged helix-like DNA-binding domain superfamily/Winged helix DNA-binding domain"/>
    <property type="match status" value="1"/>
</dbReference>
<dbReference type="HAMAP" id="MF_00674">
    <property type="entry name" value="UPF0251"/>
    <property type="match status" value="1"/>
</dbReference>
<dbReference type="InterPro" id="IPR013324">
    <property type="entry name" value="RNA_pol_sigma_r3/r4-like"/>
</dbReference>
<dbReference type="InterPro" id="IPR002852">
    <property type="entry name" value="UPF0251"/>
</dbReference>
<dbReference type="InterPro" id="IPR036388">
    <property type="entry name" value="WH-like_DNA-bd_sf"/>
</dbReference>
<dbReference type="PANTHER" id="PTHR37478">
    <property type="match status" value="1"/>
</dbReference>
<dbReference type="PANTHER" id="PTHR37478:SF2">
    <property type="entry name" value="UPF0251 PROTEIN TK0562"/>
    <property type="match status" value="1"/>
</dbReference>
<dbReference type="Pfam" id="PF02001">
    <property type="entry name" value="DUF134"/>
    <property type="match status" value="1"/>
</dbReference>
<dbReference type="SUPFAM" id="SSF88659">
    <property type="entry name" value="Sigma3 and sigma4 domains of RNA polymerase sigma factors"/>
    <property type="match status" value="1"/>
</dbReference>
<comment type="similarity">
    <text evidence="1">Belongs to the UPF0251 family.</text>
</comment>
<evidence type="ECO:0000255" key="1">
    <source>
        <dbReference type="HAMAP-Rule" id="MF_00674"/>
    </source>
</evidence>